<evidence type="ECO:0000255" key="1"/>
<evidence type="ECO:0000256" key="2">
    <source>
        <dbReference type="SAM" id="MobiDB-lite"/>
    </source>
</evidence>
<evidence type="ECO:0000305" key="3"/>
<accession>Q54DE9</accession>
<accession>Q54DF0</accession>
<sequence>MYNNNQNHHNNDNNMNKDEPTTIYPEFISISNEIKTNGSTNSYLNNIRREMLSMVNSGNNNNNNNNNNNNNNNNNNNNNNNNNDSIVINMDTINNNNNSNNIDINKSGYSQISNTTSNDNLNKTLLGNNEISQINDIDDDSSPEFIKYKKFISSLSYITFIGAAIVLINQKKSVYIQFHAYQSFYISMGVIGFQFLLIWSDILSIILWSLYLLFTIFMFLKVSFGGYGNSTIYKLPIIGNLSEQKAKLRSQEYSRYFKYHEDLFIKELREHKQALIHQSNLNRNNNNSNNVNNNGHQRINSNSSSVVMSGDVESMLNSSGSNSSIYSDVQNDIGTNEE</sequence>
<gene>
    <name type="ORF">DDB_G0292342</name>
</gene>
<comment type="subcellular location">
    <subcellularLocation>
        <location evidence="3">Membrane</location>
        <topology evidence="3">Multi-pass membrane protein</topology>
    </subcellularLocation>
</comment>
<comment type="sequence caution" evidence="3">
    <conflict type="erroneous gene model prediction">
        <sequence resource="EMBL-CDS" id="EAL61278"/>
    </conflict>
</comment>
<comment type="sequence caution" evidence="3">
    <conflict type="erroneous gene model prediction">
        <sequence resource="EMBL-CDS" id="EAL61295"/>
    </conflict>
</comment>
<name>Y5492_DICDI</name>
<keyword id="KW-0325">Glycoprotein</keyword>
<keyword id="KW-0472">Membrane</keyword>
<keyword id="KW-1185">Reference proteome</keyword>
<keyword id="KW-0812">Transmembrane</keyword>
<keyword id="KW-1133">Transmembrane helix</keyword>
<protein>
    <recommendedName>
        <fullName>Putative uncharacterized protein DDB_G0292342</fullName>
    </recommendedName>
</protein>
<organism>
    <name type="scientific">Dictyostelium discoideum</name>
    <name type="common">Social amoeba</name>
    <dbReference type="NCBI Taxonomy" id="44689"/>
    <lineage>
        <taxon>Eukaryota</taxon>
        <taxon>Amoebozoa</taxon>
        <taxon>Evosea</taxon>
        <taxon>Eumycetozoa</taxon>
        <taxon>Dictyostelia</taxon>
        <taxon>Dictyosteliales</taxon>
        <taxon>Dictyosteliaceae</taxon>
        <taxon>Dictyostelium</taxon>
    </lineage>
</organism>
<reference key="1">
    <citation type="journal article" date="2005" name="Nature">
        <title>The genome of the social amoeba Dictyostelium discoideum.</title>
        <authorList>
            <person name="Eichinger L."/>
            <person name="Pachebat J.A."/>
            <person name="Gloeckner G."/>
            <person name="Rajandream M.A."/>
            <person name="Sucgang R."/>
            <person name="Berriman M."/>
            <person name="Song J."/>
            <person name="Olsen R."/>
            <person name="Szafranski K."/>
            <person name="Xu Q."/>
            <person name="Tunggal B."/>
            <person name="Kummerfeld S."/>
            <person name="Madera M."/>
            <person name="Konfortov B.A."/>
            <person name="Rivero F."/>
            <person name="Bankier A.T."/>
            <person name="Lehmann R."/>
            <person name="Hamlin N."/>
            <person name="Davies R."/>
            <person name="Gaudet P."/>
            <person name="Fey P."/>
            <person name="Pilcher K."/>
            <person name="Chen G."/>
            <person name="Saunders D."/>
            <person name="Sodergren E.J."/>
            <person name="Davis P."/>
            <person name="Kerhornou A."/>
            <person name="Nie X."/>
            <person name="Hall N."/>
            <person name="Anjard C."/>
            <person name="Hemphill L."/>
            <person name="Bason N."/>
            <person name="Farbrother P."/>
            <person name="Desany B."/>
            <person name="Just E."/>
            <person name="Morio T."/>
            <person name="Rost R."/>
            <person name="Churcher C.M."/>
            <person name="Cooper J."/>
            <person name="Haydock S."/>
            <person name="van Driessche N."/>
            <person name="Cronin A."/>
            <person name="Goodhead I."/>
            <person name="Muzny D.M."/>
            <person name="Mourier T."/>
            <person name="Pain A."/>
            <person name="Lu M."/>
            <person name="Harper D."/>
            <person name="Lindsay R."/>
            <person name="Hauser H."/>
            <person name="James K.D."/>
            <person name="Quiles M."/>
            <person name="Madan Babu M."/>
            <person name="Saito T."/>
            <person name="Buchrieser C."/>
            <person name="Wardroper A."/>
            <person name="Felder M."/>
            <person name="Thangavelu M."/>
            <person name="Johnson D."/>
            <person name="Knights A."/>
            <person name="Loulseged H."/>
            <person name="Mungall K.L."/>
            <person name="Oliver K."/>
            <person name="Price C."/>
            <person name="Quail M.A."/>
            <person name="Urushihara H."/>
            <person name="Hernandez J."/>
            <person name="Rabbinowitsch E."/>
            <person name="Steffen D."/>
            <person name="Sanders M."/>
            <person name="Ma J."/>
            <person name="Kohara Y."/>
            <person name="Sharp S."/>
            <person name="Simmonds M.N."/>
            <person name="Spiegler S."/>
            <person name="Tivey A."/>
            <person name="Sugano S."/>
            <person name="White B."/>
            <person name="Walker D."/>
            <person name="Woodward J.R."/>
            <person name="Winckler T."/>
            <person name="Tanaka Y."/>
            <person name="Shaulsky G."/>
            <person name="Schleicher M."/>
            <person name="Weinstock G.M."/>
            <person name="Rosenthal A."/>
            <person name="Cox E.C."/>
            <person name="Chisholm R.L."/>
            <person name="Gibbs R.A."/>
            <person name="Loomis W.F."/>
            <person name="Platzer M."/>
            <person name="Kay R.R."/>
            <person name="Williams J.G."/>
            <person name="Dear P.H."/>
            <person name="Noegel A.A."/>
            <person name="Barrell B.G."/>
            <person name="Kuspa A."/>
        </authorList>
    </citation>
    <scope>NUCLEOTIDE SEQUENCE [LARGE SCALE GENOMIC DNA]</scope>
    <source>
        <strain>AX4</strain>
    </source>
</reference>
<feature type="chain" id="PRO_0000344421" description="Putative uncharacterized protein DDB_G0292342">
    <location>
        <begin position="1"/>
        <end position="338"/>
    </location>
</feature>
<feature type="transmembrane region" description="Helical" evidence="1">
    <location>
        <begin position="148"/>
        <end position="168"/>
    </location>
</feature>
<feature type="transmembrane region" description="Helical" evidence="1">
    <location>
        <begin position="178"/>
        <end position="198"/>
    </location>
</feature>
<feature type="transmembrane region" description="Helical" evidence="1">
    <location>
        <begin position="202"/>
        <end position="222"/>
    </location>
</feature>
<feature type="region of interest" description="Disordered" evidence="2">
    <location>
        <begin position="1"/>
        <end position="20"/>
    </location>
</feature>
<feature type="region of interest" description="Disordered" evidence="2">
    <location>
        <begin position="55"/>
        <end position="92"/>
    </location>
</feature>
<feature type="region of interest" description="Disordered" evidence="2">
    <location>
        <begin position="279"/>
        <end position="303"/>
    </location>
</feature>
<feature type="region of interest" description="Disordered" evidence="2">
    <location>
        <begin position="316"/>
        <end position="338"/>
    </location>
</feature>
<feature type="compositionally biased region" description="Basic and acidic residues" evidence="2">
    <location>
        <begin position="9"/>
        <end position="20"/>
    </location>
</feature>
<feature type="compositionally biased region" description="Low complexity" evidence="2">
    <location>
        <begin position="59"/>
        <end position="92"/>
    </location>
</feature>
<feature type="compositionally biased region" description="Low complexity" evidence="2">
    <location>
        <begin position="280"/>
        <end position="294"/>
    </location>
</feature>
<feature type="compositionally biased region" description="Low complexity" evidence="2">
    <location>
        <begin position="316"/>
        <end position="327"/>
    </location>
</feature>
<feature type="compositionally biased region" description="Polar residues" evidence="2">
    <location>
        <begin position="328"/>
        <end position="338"/>
    </location>
</feature>
<feature type="glycosylation site" description="N-linked (GlcNAc...) asparagine" evidence="1">
    <location>
        <position position="37"/>
    </location>
</feature>
<feature type="glycosylation site" description="N-linked (GlcNAc...) asparagine" evidence="1">
    <location>
        <position position="83"/>
    </location>
</feature>
<feature type="glycosylation site" description="N-linked (GlcNAc...) asparagine" evidence="1">
    <location>
        <position position="97"/>
    </location>
</feature>
<feature type="glycosylation site" description="N-linked (GlcNAc...) asparagine" evidence="1">
    <location>
        <position position="105"/>
    </location>
</feature>
<feature type="glycosylation site" description="N-linked (GlcNAc...) asparagine" evidence="1">
    <location>
        <position position="114"/>
    </location>
</feature>
<feature type="glycosylation site" description="N-linked (GlcNAc...) asparagine" evidence="1">
    <location>
        <position position="122"/>
    </location>
</feature>
<feature type="glycosylation site" description="N-linked (GlcNAc...) asparagine" evidence="1">
    <location>
        <position position="229"/>
    </location>
</feature>
<feature type="glycosylation site" description="N-linked (GlcNAc...) asparagine" evidence="1">
    <location>
        <position position="240"/>
    </location>
</feature>
<feature type="glycosylation site" description="N-linked (GlcNAc...) asparagine" evidence="1">
    <location>
        <position position="286"/>
    </location>
</feature>
<feature type="glycosylation site" description="N-linked (GlcNAc...) asparagine" evidence="1">
    <location>
        <position position="302"/>
    </location>
</feature>
<feature type="glycosylation site" description="N-linked (GlcNAc...) asparagine" evidence="1">
    <location>
        <position position="317"/>
    </location>
</feature>
<feature type="glycosylation site" description="N-linked (GlcNAc...) asparagine" evidence="1">
    <location>
        <position position="322"/>
    </location>
</feature>
<dbReference type="EMBL" id="AAFI02000189">
    <property type="protein sequence ID" value="EAL61278.1"/>
    <property type="status" value="ALT_SEQ"/>
    <property type="molecule type" value="Genomic_DNA"/>
</dbReference>
<dbReference type="EMBL" id="AAFI02000189">
    <property type="protein sequence ID" value="EAL61295.1"/>
    <property type="status" value="ALT_SEQ"/>
    <property type="molecule type" value="Genomic_DNA"/>
</dbReference>
<dbReference type="RefSeq" id="XP_629691.1">
    <property type="nucleotide sequence ID" value="XM_629689.1"/>
</dbReference>
<dbReference type="RefSeq" id="XP_629692.1">
    <property type="nucleotide sequence ID" value="XM_629690.1"/>
</dbReference>
<dbReference type="SMR" id="Q54DE9"/>
<dbReference type="GlyGen" id="Q54DE9">
    <property type="glycosylation" value="12 sites"/>
</dbReference>
<dbReference type="PaxDb" id="44689-DDB0215492"/>
<dbReference type="EnsemblProtists" id="EAL61278">
    <property type="protein sequence ID" value="EAL61278"/>
    <property type="gene ID" value="DDB_G0292308"/>
</dbReference>
<dbReference type="EnsemblProtists" id="EAL61295">
    <property type="protein sequence ID" value="EAL61295"/>
    <property type="gene ID" value="DDB_G0292342"/>
</dbReference>
<dbReference type="GeneID" id="8628608"/>
<dbReference type="KEGG" id="ddi:DDB_G0292308"/>
<dbReference type="KEGG" id="ddi:DDB_G0292342"/>
<dbReference type="dictyBase" id="DDB_G0292342"/>
<dbReference type="VEuPathDB" id="AmoebaDB:DDB_G0292308"/>
<dbReference type="VEuPathDB" id="AmoebaDB:DDB_G0292342"/>
<dbReference type="eggNOG" id="ENOG502RI8X">
    <property type="taxonomic scope" value="Eukaryota"/>
</dbReference>
<dbReference type="InParanoid" id="Q54DE9"/>
<dbReference type="PRO" id="PR:Q54DE9"/>
<dbReference type="Proteomes" id="UP000002195">
    <property type="component" value="Chromosome 6"/>
</dbReference>
<dbReference type="GO" id="GO:0016020">
    <property type="term" value="C:membrane"/>
    <property type="evidence" value="ECO:0007669"/>
    <property type="project" value="UniProtKB-SubCell"/>
</dbReference>
<dbReference type="PANTHER" id="PTHR36460">
    <property type="entry name" value="UPF0132 DOMAIN PROTEIN (AFU_ORTHOLOGUE AFUA_3G10255)"/>
    <property type="match status" value="1"/>
</dbReference>
<dbReference type="PANTHER" id="PTHR36460:SF1">
    <property type="entry name" value="UPF0132 DOMAIN PROTEIN (AFU_ORTHOLOGUE AFUA_3G10255)"/>
    <property type="match status" value="1"/>
</dbReference>
<proteinExistence type="predicted"/>